<dbReference type="EMBL" id="AE017345">
    <property type="protein sequence ID" value="AAW43779.2"/>
    <property type="molecule type" value="Genomic_DNA"/>
</dbReference>
<dbReference type="RefSeq" id="XP_571086.1">
    <property type="nucleotide sequence ID" value="XM_571086.1"/>
</dbReference>
<dbReference type="SMR" id="P0CM68"/>
<dbReference type="STRING" id="214684.P0CM68"/>
<dbReference type="PaxDb" id="214684-P0CM68"/>
<dbReference type="eggNOG" id="KOG4149">
    <property type="taxonomic scope" value="Eukaryota"/>
</dbReference>
<dbReference type="HOGENOM" id="CLU_054990_1_3_1"/>
<dbReference type="InParanoid" id="P0CM68"/>
<dbReference type="Proteomes" id="UP000002149">
    <property type="component" value="Chromosome 5"/>
</dbReference>
<dbReference type="GO" id="GO:0005743">
    <property type="term" value="C:mitochondrial inner membrane"/>
    <property type="evidence" value="ECO:0007669"/>
    <property type="project" value="UniProtKB-SubCell"/>
</dbReference>
<dbReference type="GO" id="GO:0005758">
    <property type="term" value="C:mitochondrial intermembrane space"/>
    <property type="evidence" value="ECO:0000318"/>
    <property type="project" value="GO_Central"/>
</dbReference>
<dbReference type="GO" id="GO:0015035">
    <property type="term" value="F:protein-disulfide reductase activity"/>
    <property type="evidence" value="ECO:0000318"/>
    <property type="project" value="GO_Central"/>
</dbReference>
<dbReference type="GO" id="GO:0045041">
    <property type="term" value="P:protein import into mitochondrial intermembrane space"/>
    <property type="evidence" value="ECO:0000318"/>
    <property type="project" value="GO_Central"/>
</dbReference>
<dbReference type="FunFam" id="1.10.287.2900:FF:000002">
    <property type="entry name" value="Mitochondrial intermembrane space import and assembly protein"/>
    <property type="match status" value="1"/>
</dbReference>
<dbReference type="Gene3D" id="1.10.287.2900">
    <property type="match status" value="1"/>
</dbReference>
<dbReference type="InterPro" id="IPR010625">
    <property type="entry name" value="CHCH"/>
</dbReference>
<dbReference type="InterPro" id="IPR039289">
    <property type="entry name" value="CHCHD4"/>
</dbReference>
<dbReference type="PANTHER" id="PTHR21622">
    <property type="entry name" value="COILED-COIL-HELIX-COILED-COIL-HELIX DOMAIN CONTAINING 4"/>
    <property type="match status" value="1"/>
</dbReference>
<dbReference type="PANTHER" id="PTHR21622:SF0">
    <property type="entry name" value="COILED-COIL-HELIX-COILED-COIL-HELIX DOMAIN CONTAINING 4"/>
    <property type="match status" value="1"/>
</dbReference>
<dbReference type="Pfam" id="PF06747">
    <property type="entry name" value="CHCH"/>
    <property type="match status" value="1"/>
</dbReference>
<dbReference type="PROSITE" id="PS51808">
    <property type="entry name" value="CHCH"/>
    <property type="match status" value="1"/>
</dbReference>
<reference key="1">
    <citation type="journal article" date="2005" name="Science">
        <title>The genome of the basidiomycetous yeast and human pathogen Cryptococcus neoformans.</title>
        <authorList>
            <person name="Loftus B.J."/>
            <person name="Fung E."/>
            <person name="Roncaglia P."/>
            <person name="Rowley D."/>
            <person name="Amedeo P."/>
            <person name="Bruno D."/>
            <person name="Vamathevan J."/>
            <person name="Miranda M."/>
            <person name="Anderson I.J."/>
            <person name="Fraser J.A."/>
            <person name="Allen J.E."/>
            <person name="Bosdet I.E."/>
            <person name="Brent M.R."/>
            <person name="Chiu R."/>
            <person name="Doering T.L."/>
            <person name="Donlin M.J."/>
            <person name="D'Souza C.A."/>
            <person name="Fox D.S."/>
            <person name="Grinberg V."/>
            <person name="Fu J."/>
            <person name="Fukushima M."/>
            <person name="Haas B.J."/>
            <person name="Huang J.C."/>
            <person name="Janbon G."/>
            <person name="Jones S.J.M."/>
            <person name="Koo H.L."/>
            <person name="Krzywinski M.I."/>
            <person name="Kwon-Chung K.J."/>
            <person name="Lengeler K.B."/>
            <person name="Maiti R."/>
            <person name="Marra M.A."/>
            <person name="Marra R.E."/>
            <person name="Mathewson C.A."/>
            <person name="Mitchell T.G."/>
            <person name="Pertea M."/>
            <person name="Riggs F.R."/>
            <person name="Salzberg S.L."/>
            <person name="Schein J.E."/>
            <person name="Shvartsbeyn A."/>
            <person name="Shin H."/>
            <person name="Shumway M."/>
            <person name="Specht C.A."/>
            <person name="Suh B.B."/>
            <person name="Tenney A."/>
            <person name="Utterback T.R."/>
            <person name="Wickes B.L."/>
            <person name="Wortman J.R."/>
            <person name="Wye N.H."/>
            <person name="Kronstad J.W."/>
            <person name="Lodge J.K."/>
            <person name="Heitman J."/>
            <person name="Davis R.W."/>
            <person name="Fraser C.M."/>
            <person name="Hyman R.W."/>
        </authorList>
    </citation>
    <scope>NUCLEOTIDE SEQUENCE [LARGE SCALE GENOMIC DNA]</scope>
    <source>
        <strain>JEC21 / ATCC MYA-565</strain>
    </source>
</reference>
<protein>
    <recommendedName>
        <fullName>Mitochondrial intermembrane space import and assembly protein 40</fullName>
    </recommendedName>
    <alternativeName>
        <fullName>Mitochondrial import inner membrane translocase TIM40</fullName>
    </alternativeName>
</protein>
<comment type="function">
    <text evidence="1">Required for the import and folding of small cysteine-containing proteins (small Tim) in the mitochondrial intermembrane space (IMS). Forms a redox cycle with ERV1 that involves a disulfide relay system. Precursor proteins to be imported into the IMS are translocated in their reduced form into the mitochondria. The oxidized form of MIA40 forms a transient intermolecular disulfide bridge with the reduced precursor protein, resulting in oxidation of the precursor protein that now contains an intramolecular disulfide bond and is able to undergo folding in the IMS (By similarity).</text>
</comment>
<comment type="cofactor">
    <cofactor evidence="1">
        <name>Cu(2+)</name>
        <dbReference type="ChEBI" id="CHEBI:29036"/>
    </cofactor>
    <cofactor evidence="1">
        <name>Zn(2+)</name>
        <dbReference type="ChEBI" id="CHEBI:29105"/>
    </cofactor>
    <text evidence="1">Cu(2+) or Zn(2+).</text>
</comment>
<comment type="subunit">
    <text evidence="1">Monomer.</text>
</comment>
<comment type="subcellular location">
    <subcellularLocation>
        <location evidence="1">Mitochondrion inner membrane</location>
        <topology evidence="1">Single-pass type II membrane protein</topology>
        <orientation evidence="1">Intermembrane side</orientation>
    </subcellularLocation>
</comment>
<comment type="domain">
    <text evidence="1">The CHCH domain contains a conserved twin Cys-X(9)-Cys motif which is required for import and stability of MIA40 in mitochondria.</text>
</comment>
<keyword id="KW-1015">Disulfide bond</keyword>
<keyword id="KW-0472">Membrane</keyword>
<keyword id="KW-0496">Mitochondrion</keyword>
<keyword id="KW-0999">Mitochondrion inner membrane</keyword>
<keyword id="KW-0560">Oxidoreductase</keyword>
<keyword id="KW-0653">Protein transport</keyword>
<keyword id="KW-0676">Redox-active center</keyword>
<keyword id="KW-1185">Reference proteome</keyword>
<keyword id="KW-0735">Signal-anchor</keyword>
<keyword id="KW-0809">Transit peptide</keyword>
<keyword id="KW-0811">Translocation</keyword>
<keyword id="KW-0812">Transmembrane</keyword>
<keyword id="KW-1133">Transmembrane helix</keyword>
<keyword id="KW-0813">Transport</keyword>
<accession>P0CM68</accession>
<accession>Q55RV1</accession>
<accession>Q5KGA4</accession>
<proteinExistence type="inferred from homology"/>
<name>MIA40_CRYNJ</name>
<sequence length="230" mass="24727">MFARSFSNASRTIARRSLSTRSGPAPSSLWSSRNAVIAGTTLAITALAVTSERRKVFNESAQKATSPRDSIIAQDSLKENVHKKSVRQDEFSGESTKPEASTSSDSVEKAADDAAQILEEKEAEASEPSQGAYNPETGEINWDCPCLGGMATGPCGEQFKAAFSCFVYSEAEPKGVDCVELFKVMQDCFREHPEIYGEEIDDDEAPAQEGTMEEKVEAAKEETAAPAAAP</sequence>
<feature type="transit peptide" description="Mitochondrion" evidence="2">
    <location>
        <begin position="1"/>
        <end position="18"/>
    </location>
</feature>
<feature type="chain" id="PRO_0000235287" description="Mitochondrial intermembrane space import and assembly protein 40">
    <location>
        <begin position="19"/>
        <end position="230"/>
    </location>
</feature>
<feature type="topological domain" description="Mitochondrial matrix" evidence="2">
    <location>
        <begin position="19"/>
        <end position="34"/>
    </location>
</feature>
<feature type="transmembrane region" description="Helical; Signal-anchor for type II membrane protein" evidence="2">
    <location>
        <begin position="35"/>
        <end position="51"/>
    </location>
</feature>
<feature type="topological domain" description="Mitochondrial intermembrane" evidence="2">
    <location>
        <begin position="52"/>
        <end position="230"/>
    </location>
</feature>
<feature type="domain" description="CHCH" evidence="3">
    <location>
        <begin position="152"/>
        <end position="196"/>
    </location>
</feature>
<feature type="region of interest" description="Disordered" evidence="4">
    <location>
        <begin position="1"/>
        <end position="30"/>
    </location>
</feature>
<feature type="region of interest" description="Disordered" evidence="4">
    <location>
        <begin position="58"/>
        <end position="111"/>
    </location>
</feature>
<feature type="region of interest" description="Disordered" evidence="4">
    <location>
        <begin position="195"/>
        <end position="230"/>
    </location>
</feature>
<feature type="short sequence motif" description="Cx9C motif 1" evidence="3">
    <location>
        <begin position="155"/>
        <end position="165"/>
    </location>
</feature>
<feature type="short sequence motif" description="Cx9C motif 2" evidence="3">
    <location>
        <begin position="178"/>
        <end position="188"/>
    </location>
</feature>
<feature type="compositionally biased region" description="Polar residues" evidence="4">
    <location>
        <begin position="1"/>
        <end position="22"/>
    </location>
</feature>
<feature type="compositionally biased region" description="Polar residues" evidence="4">
    <location>
        <begin position="59"/>
        <end position="68"/>
    </location>
</feature>
<feature type="compositionally biased region" description="Basic and acidic residues" evidence="4">
    <location>
        <begin position="76"/>
        <end position="90"/>
    </location>
</feature>
<feature type="compositionally biased region" description="Polar residues" evidence="4">
    <location>
        <begin position="93"/>
        <end position="105"/>
    </location>
</feature>
<feature type="compositionally biased region" description="Acidic residues" evidence="4">
    <location>
        <begin position="196"/>
        <end position="206"/>
    </location>
</feature>
<feature type="compositionally biased region" description="Basic and acidic residues" evidence="4">
    <location>
        <begin position="212"/>
        <end position="223"/>
    </location>
</feature>
<feature type="disulfide bond" description="Redox-active" evidence="1">
    <location>
        <begin position="144"/>
        <end position="146"/>
    </location>
</feature>
<feature type="disulfide bond" evidence="3">
    <location>
        <begin position="155"/>
        <end position="188"/>
    </location>
</feature>
<feature type="disulfide bond" evidence="3">
    <location>
        <begin position="165"/>
        <end position="178"/>
    </location>
</feature>
<evidence type="ECO:0000250" key="1"/>
<evidence type="ECO:0000255" key="2"/>
<evidence type="ECO:0000255" key="3">
    <source>
        <dbReference type="PROSITE-ProRule" id="PRU01150"/>
    </source>
</evidence>
<evidence type="ECO:0000256" key="4">
    <source>
        <dbReference type="SAM" id="MobiDB-lite"/>
    </source>
</evidence>
<organism>
    <name type="scientific">Cryptococcus neoformans var. neoformans serotype D (strain JEC21 / ATCC MYA-565)</name>
    <name type="common">Filobasidiella neoformans</name>
    <dbReference type="NCBI Taxonomy" id="214684"/>
    <lineage>
        <taxon>Eukaryota</taxon>
        <taxon>Fungi</taxon>
        <taxon>Dikarya</taxon>
        <taxon>Basidiomycota</taxon>
        <taxon>Agaricomycotina</taxon>
        <taxon>Tremellomycetes</taxon>
        <taxon>Tremellales</taxon>
        <taxon>Cryptococcaceae</taxon>
        <taxon>Cryptococcus</taxon>
        <taxon>Cryptococcus neoformans species complex</taxon>
    </lineage>
</organism>
<gene>
    <name type="primary">MIA40</name>
    <name type="synonym">TIM40</name>
    <name type="ordered locus">CNE04310</name>
</gene>